<accession>Q65PG8</accession>
<accession>Q62ZV7</accession>
<gene>
    <name evidence="1" type="primary">pth</name>
    <name type="synonym">spoVC</name>
    <name type="ordered locus">BLi00066</name>
    <name type="ordered locus">BL00517</name>
</gene>
<evidence type="ECO:0000255" key="1">
    <source>
        <dbReference type="HAMAP-Rule" id="MF_00083"/>
    </source>
</evidence>
<comment type="function">
    <text evidence="1">Hydrolyzes ribosome-free peptidyl-tRNAs (with 1 or more amino acids incorporated), which drop off the ribosome during protein synthesis, or as a result of ribosome stalling.</text>
</comment>
<comment type="function">
    <text evidence="1">Catalyzes the release of premature peptidyl moieties from peptidyl-tRNA molecules trapped in stalled 50S ribosomal subunits, and thus maintains levels of free tRNAs and 50S ribosomes.</text>
</comment>
<comment type="catalytic activity">
    <reaction evidence="1">
        <text>an N-acyl-L-alpha-aminoacyl-tRNA + H2O = an N-acyl-L-amino acid + a tRNA + H(+)</text>
        <dbReference type="Rhea" id="RHEA:54448"/>
        <dbReference type="Rhea" id="RHEA-COMP:10123"/>
        <dbReference type="Rhea" id="RHEA-COMP:13883"/>
        <dbReference type="ChEBI" id="CHEBI:15377"/>
        <dbReference type="ChEBI" id="CHEBI:15378"/>
        <dbReference type="ChEBI" id="CHEBI:59874"/>
        <dbReference type="ChEBI" id="CHEBI:78442"/>
        <dbReference type="ChEBI" id="CHEBI:138191"/>
        <dbReference type="EC" id="3.1.1.29"/>
    </reaction>
</comment>
<comment type="subunit">
    <text evidence="1">Monomer.</text>
</comment>
<comment type="subcellular location">
    <subcellularLocation>
        <location evidence="1">Cytoplasm</location>
    </subcellularLocation>
</comment>
<comment type="similarity">
    <text evidence="1">Belongs to the PTH family.</text>
</comment>
<feature type="chain" id="PRO_0000187690" description="Peptidyl-tRNA hydrolase">
    <location>
        <begin position="1"/>
        <end position="188"/>
    </location>
</feature>
<feature type="active site" description="Proton acceptor" evidence="1">
    <location>
        <position position="19"/>
    </location>
</feature>
<feature type="binding site" evidence="1">
    <location>
        <position position="14"/>
    </location>
    <ligand>
        <name>tRNA</name>
        <dbReference type="ChEBI" id="CHEBI:17843"/>
    </ligand>
</feature>
<feature type="binding site" evidence="1">
    <location>
        <position position="64"/>
    </location>
    <ligand>
        <name>tRNA</name>
        <dbReference type="ChEBI" id="CHEBI:17843"/>
    </ligand>
</feature>
<feature type="binding site" evidence="1">
    <location>
        <position position="66"/>
    </location>
    <ligand>
        <name>tRNA</name>
        <dbReference type="ChEBI" id="CHEBI:17843"/>
    </ligand>
</feature>
<feature type="binding site" evidence="1">
    <location>
        <position position="112"/>
    </location>
    <ligand>
        <name>tRNA</name>
        <dbReference type="ChEBI" id="CHEBI:17843"/>
    </ligand>
</feature>
<feature type="site" description="Discriminates between blocked and unblocked aminoacyl-tRNA" evidence="1">
    <location>
        <position position="9"/>
    </location>
</feature>
<feature type="site" description="Stabilizes the basic form of H active site to accept a proton" evidence="1">
    <location>
        <position position="91"/>
    </location>
</feature>
<reference key="1">
    <citation type="journal article" date="2004" name="J. Mol. Microbiol. Biotechnol.">
        <title>The complete genome sequence of Bacillus licheniformis DSM13, an organism with great industrial potential.</title>
        <authorList>
            <person name="Veith B."/>
            <person name="Herzberg C."/>
            <person name="Steckel S."/>
            <person name="Feesche J."/>
            <person name="Maurer K.H."/>
            <person name="Ehrenreich P."/>
            <person name="Baeumer S."/>
            <person name="Henne A."/>
            <person name="Liesegang H."/>
            <person name="Merkl R."/>
            <person name="Ehrenreich A."/>
            <person name="Gottschalk G."/>
        </authorList>
    </citation>
    <scope>NUCLEOTIDE SEQUENCE [LARGE SCALE GENOMIC DNA]</scope>
    <source>
        <strain>ATCC 14580 / DSM 13 / JCM 2505 / CCUG 7422 / NBRC 12200 / NCIMB 9375 / NCTC 10341 / NRRL NRS-1264 / Gibson 46</strain>
    </source>
</reference>
<reference key="2">
    <citation type="journal article" date="2004" name="Genome Biol.">
        <title>Complete genome sequence of the industrial bacterium Bacillus licheniformis and comparisons with closely related Bacillus species.</title>
        <authorList>
            <person name="Rey M.W."/>
            <person name="Ramaiya P."/>
            <person name="Nelson B.A."/>
            <person name="Brody-Karpin S.D."/>
            <person name="Zaretsky E.J."/>
            <person name="Tang M."/>
            <person name="Lopez de Leon A."/>
            <person name="Xiang H."/>
            <person name="Gusti V."/>
            <person name="Clausen I.G."/>
            <person name="Olsen P.B."/>
            <person name="Rasmussen M.D."/>
            <person name="Andersen J.T."/>
            <person name="Joergensen P.L."/>
            <person name="Larsen T.S."/>
            <person name="Sorokin A."/>
            <person name="Bolotin A."/>
            <person name="Lapidus A."/>
            <person name="Galleron N."/>
            <person name="Ehrlich S.D."/>
            <person name="Berka R.M."/>
        </authorList>
    </citation>
    <scope>NUCLEOTIDE SEQUENCE [LARGE SCALE GENOMIC DNA]</scope>
    <source>
        <strain>ATCC 14580 / DSM 13 / JCM 2505 / CCUG 7422 / NBRC 12200 / NCIMB 9375 / NCTC 10341 / NRRL NRS-1264 / Gibson 46</strain>
    </source>
</reference>
<sequence length="188" mass="20924">MLVFAGLGNPGKTYENTRHNVGFMTIDELSKEWNIPLDKTKFNGQYGIGFVSGKKVLLVKPLTYMNLSGECLRPLLDYYEIPVDNLKVIYDDLDLPTGRIRLRTKGSAGGHNGIKSTIQHLGTSEFNRIRIGIGRPVNGMKVVDYVLGAFTDEEEPAIKEAVRQSAKACEASLEKPFLEVMNEFNAKV</sequence>
<keyword id="KW-0963">Cytoplasm</keyword>
<keyword id="KW-0378">Hydrolase</keyword>
<keyword id="KW-1185">Reference proteome</keyword>
<keyword id="KW-0694">RNA-binding</keyword>
<keyword id="KW-0820">tRNA-binding</keyword>
<name>PTH_BACLD</name>
<protein>
    <recommendedName>
        <fullName evidence="1">Peptidyl-tRNA hydrolase</fullName>
        <shortName evidence="1">Pth</shortName>
        <ecNumber evidence="1">3.1.1.29</ecNumber>
    </recommendedName>
</protein>
<proteinExistence type="inferred from homology"/>
<organism>
    <name type="scientific">Bacillus licheniformis (strain ATCC 14580 / DSM 13 / JCM 2505 / CCUG 7422 / NBRC 12200 / NCIMB 9375 / NCTC 10341 / NRRL NRS-1264 / Gibson 46)</name>
    <dbReference type="NCBI Taxonomy" id="279010"/>
    <lineage>
        <taxon>Bacteria</taxon>
        <taxon>Bacillati</taxon>
        <taxon>Bacillota</taxon>
        <taxon>Bacilli</taxon>
        <taxon>Bacillales</taxon>
        <taxon>Bacillaceae</taxon>
        <taxon>Bacillus</taxon>
    </lineage>
</organism>
<dbReference type="EC" id="3.1.1.29" evidence="1"/>
<dbReference type="EMBL" id="AE017333">
    <property type="protein sequence ID" value="AAU39046.1"/>
    <property type="molecule type" value="Genomic_DNA"/>
</dbReference>
<dbReference type="EMBL" id="CP000002">
    <property type="protein sequence ID" value="AAU21701.1"/>
    <property type="molecule type" value="Genomic_DNA"/>
</dbReference>
<dbReference type="RefSeq" id="WP_003178208.1">
    <property type="nucleotide sequence ID" value="NC_006322.1"/>
</dbReference>
<dbReference type="SMR" id="Q65PG8"/>
<dbReference type="STRING" id="279010.BL00517"/>
<dbReference type="GeneID" id="92858982"/>
<dbReference type="KEGG" id="bld:BLi00066"/>
<dbReference type="KEGG" id="bli:BL00517"/>
<dbReference type="PATRIC" id="fig|279010.13.peg.59"/>
<dbReference type="eggNOG" id="COG0193">
    <property type="taxonomic scope" value="Bacteria"/>
</dbReference>
<dbReference type="HOGENOM" id="CLU_062456_4_1_9"/>
<dbReference type="Proteomes" id="UP000000606">
    <property type="component" value="Chromosome"/>
</dbReference>
<dbReference type="GO" id="GO:0005737">
    <property type="term" value="C:cytoplasm"/>
    <property type="evidence" value="ECO:0007669"/>
    <property type="project" value="UniProtKB-SubCell"/>
</dbReference>
<dbReference type="GO" id="GO:0004045">
    <property type="term" value="F:peptidyl-tRNA hydrolase activity"/>
    <property type="evidence" value="ECO:0007669"/>
    <property type="project" value="UniProtKB-UniRule"/>
</dbReference>
<dbReference type="GO" id="GO:0000049">
    <property type="term" value="F:tRNA binding"/>
    <property type="evidence" value="ECO:0007669"/>
    <property type="project" value="UniProtKB-UniRule"/>
</dbReference>
<dbReference type="GO" id="GO:0006515">
    <property type="term" value="P:protein quality control for misfolded or incompletely synthesized proteins"/>
    <property type="evidence" value="ECO:0007669"/>
    <property type="project" value="UniProtKB-UniRule"/>
</dbReference>
<dbReference type="GO" id="GO:0072344">
    <property type="term" value="P:rescue of stalled ribosome"/>
    <property type="evidence" value="ECO:0007669"/>
    <property type="project" value="UniProtKB-UniRule"/>
</dbReference>
<dbReference type="CDD" id="cd00462">
    <property type="entry name" value="PTH"/>
    <property type="match status" value="1"/>
</dbReference>
<dbReference type="FunFam" id="3.40.50.1470:FF:000001">
    <property type="entry name" value="Peptidyl-tRNA hydrolase"/>
    <property type="match status" value="1"/>
</dbReference>
<dbReference type="Gene3D" id="3.40.50.1470">
    <property type="entry name" value="Peptidyl-tRNA hydrolase"/>
    <property type="match status" value="1"/>
</dbReference>
<dbReference type="HAMAP" id="MF_00083">
    <property type="entry name" value="Pept_tRNA_hydro_bact"/>
    <property type="match status" value="1"/>
</dbReference>
<dbReference type="InterPro" id="IPR001328">
    <property type="entry name" value="Pept_tRNA_hydro"/>
</dbReference>
<dbReference type="InterPro" id="IPR018171">
    <property type="entry name" value="Pept_tRNA_hydro_CS"/>
</dbReference>
<dbReference type="InterPro" id="IPR036416">
    <property type="entry name" value="Pept_tRNA_hydro_sf"/>
</dbReference>
<dbReference type="NCBIfam" id="TIGR00447">
    <property type="entry name" value="pth"/>
    <property type="match status" value="1"/>
</dbReference>
<dbReference type="PANTHER" id="PTHR17224">
    <property type="entry name" value="PEPTIDYL-TRNA HYDROLASE"/>
    <property type="match status" value="1"/>
</dbReference>
<dbReference type="PANTHER" id="PTHR17224:SF1">
    <property type="entry name" value="PEPTIDYL-TRNA HYDROLASE"/>
    <property type="match status" value="1"/>
</dbReference>
<dbReference type="Pfam" id="PF01195">
    <property type="entry name" value="Pept_tRNA_hydro"/>
    <property type="match status" value="1"/>
</dbReference>
<dbReference type="SUPFAM" id="SSF53178">
    <property type="entry name" value="Peptidyl-tRNA hydrolase-like"/>
    <property type="match status" value="1"/>
</dbReference>
<dbReference type="PROSITE" id="PS01195">
    <property type="entry name" value="PEPT_TRNA_HYDROL_1"/>
    <property type="match status" value="1"/>
</dbReference>
<dbReference type="PROSITE" id="PS01196">
    <property type="entry name" value="PEPT_TRNA_HYDROL_2"/>
    <property type="match status" value="1"/>
</dbReference>